<comment type="function">
    <text evidence="1">Catalyzes the conversion of acetate into acetyl-CoA (AcCoA), an essential intermediate at the junction of anabolic and catabolic pathways. Acs undergoes a two-step reaction. In the first half reaction, Acs combines acetate with ATP to form acetyl-adenylate (AcAMP) intermediate. In the second half reaction, it can then transfer the acetyl group from AcAMP to the sulfhydryl group of CoA, forming the product AcCoA.</text>
</comment>
<comment type="function">
    <text evidence="1">Enables the cell to use acetate during aerobic growth to generate energy via the TCA cycle, and biosynthetic compounds via the glyoxylate shunt. Acetylates CheY, the response regulator involved in flagellar movement and chemotaxis.</text>
</comment>
<comment type="catalytic activity">
    <reaction evidence="1">
        <text>acetate + ATP + CoA = acetyl-CoA + AMP + diphosphate</text>
        <dbReference type="Rhea" id="RHEA:23176"/>
        <dbReference type="ChEBI" id="CHEBI:30089"/>
        <dbReference type="ChEBI" id="CHEBI:30616"/>
        <dbReference type="ChEBI" id="CHEBI:33019"/>
        <dbReference type="ChEBI" id="CHEBI:57287"/>
        <dbReference type="ChEBI" id="CHEBI:57288"/>
        <dbReference type="ChEBI" id="CHEBI:456215"/>
        <dbReference type="EC" id="6.2.1.1"/>
    </reaction>
</comment>
<comment type="cofactor">
    <cofactor evidence="1">
        <name>Mg(2+)</name>
        <dbReference type="ChEBI" id="CHEBI:18420"/>
    </cofactor>
</comment>
<comment type="PTM">
    <text evidence="1">Acetylated. Deacetylation by the SIR2-homolog deacetylase activates the enzyme.</text>
</comment>
<comment type="similarity">
    <text evidence="1">Belongs to the ATP-dependent AMP-binding enzyme family.</text>
</comment>
<feature type="chain" id="PRO_1000065335" description="Acetyl-coenzyme A synthetase">
    <location>
        <begin position="1"/>
        <end position="652"/>
    </location>
</feature>
<feature type="binding site" evidence="1">
    <location>
        <begin position="191"/>
        <end position="194"/>
    </location>
    <ligand>
        <name>CoA</name>
        <dbReference type="ChEBI" id="CHEBI:57287"/>
    </ligand>
</feature>
<feature type="binding site" evidence="1">
    <location>
        <position position="311"/>
    </location>
    <ligand>
        <name>CoA</name>
        <dbReference type="ChEBI" id="CHEBI:57287"/>
    </ligand>
</feature>
<feature type="binding site" evidence="1">
    <location>
        <position position="335"/>
    </location>
    <ligand>
        <name>CoA</name>
        <dbReference type="ChEBI" id="CHEBI:57287"/>
    </ligand>
</feature>
<feature type="binding site" evidence="1">
    <location>
        <begin position="387"/>
        <end position="389"/>
    </location>
    <ligand>
        <name>ATP</name>
        <dbReference type="ChEBI" id="CHEBI:30616"/>
    </ligand>
</feature>
<feature type="binding site" evidence="1">
    <location>
        <begin position="411"/>
        <end position="416"/>
    </location>
    <ligand>
        <name>ATP</name>
        <dbReference type="ChEBI" id="CHEBI:30616"/>
    </ligand>
</feature>
<feature type="binding site" evidence="1">
    <location>
        <position position="500"/>
    </location>
    <ligand>
        <name>ATP</name>
        <dbReference type="ChEBI" id="CHEBI:30616"/>
    </ligand>
</feature>
<feature type="binding site" evidence="1">
    <location>
        <position position="515"/>
    </location>
    <ligand>
        <name>ATP</name>
        <dbReference type="ChEBI" id="CHEBI:30616"/>
    </ligand>
</feature>
<feature type="binding site" evidence="1">
    <location>
        <position position="523"/>
    </location>
    <ligand>
        <name>CoA</name>
        <dbReference type="ChEBI" id="CHEBI:57287"/>
    </ligand>
</feature>
<feature type="binding site" evidence="1">
    <location>
        <position position="526"/>
    </location>
    <ligand>
        <name>ATP</name>
        <dbReference type="ChEBI" id="CHEBI:30616"/>
    </ligand>
</feature>
<feature type="binding site" evidence="1">
    <location>
        <position position="537"/>
    </location>
    <ligand>
        <name>Mg(2+)</name>
        <dbReference type="ChEBI" id="CHEBI:18420"/>
    </ligand>
</feature>
<feature type="binding site" evidence="1">
    <location>
        <position position="539"/>
    </location>
    <ligand>
        <name>Mg(2+)</name>
        <dbReference type="ChEBI" id="CHEBI:18420"/>
    </ligand>
</feature>
<feature type="binding site" evidence="1">
    <location>
        <position position="542"/>
    </location>
    <ligand>
        <name>Mg(2+)</name>
        <dbReference type="ChEBI" id="CHEBI:18420"/>
    </ligand>
</feature>
<feature type="binding site" evidence="1">
    <location>
        <position position="584"/>
    </location>
    <ligand>
        <name>CoA</name>
        <dbReference type="ChEBI" id="CHEBI:57287"/>
    </ligand>
</feature>
<feature type="modified residue" description="N6-acetyllysine" evidence="1">
    <location>
        <position position="609"/>
    </location>
</feature>
<evidence type="ECO:0000255" key="1">
    <source>
        <dbReference type="HAMAP-Rule" id="MF_01123"/>
    </source>
</evidence>
<accession>Q1CE37</accession>
<accession>C4GYD8</accession>
<gene>
    <name evidence="1" type="primary">acs</name>
    <name type="ordered locus">YPN_3416</name>
    <name type="ORF">YP516_3881</name>
</gene>
<name>ACSA_YERPN</name>
<dbReference type="EC" id="6.2.1.1" evidence="1"/>
<dbReference type="EMBL" id="CP000305">
    <property type="protein sequence ID" value="ABG19743.1"/>
    <property type="molecule type" value="Genomic_DNA"/>
</dbReference>
<dbReference type="EMBL" id="ACNQ01000017">
    <property type="protein sequence ID" value="EEO75938.1"/>
    <property type="molecule type" value="Genomic_DNA"/>
</dbReference>
<dbReference type="RefSeq" id="WP_002209031.1">
    <property type="nucleotide sequence ID" value="NZ_ACNQ01000017.1"/>
</dbReference>
<dbReference type="SMR" id="Q1CE37"/>
<dbReference type="GeneID" id="57974350"/>
<dbReference type="KEGG" id="ypn:YPN_3416"/>
<dbReference type="HOGENOM" id="CLU_000022_3_6_6"/>
<dbReference type="Proteomes" id="UP000008936">
    <property type="component" value="Chromosome"/>
</dbReference>
<dbReference type="GO" id="GO:0005829">
    <property type="term" value="C:cytosol"/>
    <property type="evidence" value="ECO:0007669"/>
    <property type="project" value="TreeGrafter"/>
</dbReference>
<dbReference type="GO" id="GO:0003987">
    <property type="term" value="F:acetate-CoA ligase activity"/>
    <property type="evidence" value="ECO:0007669"/>
    <property type="project" value="UniProtKB-UniRule"/>
</dbReference>
<dbReference type="GO" id="GO:0016208">
    <property type="term" value="F:AMP binding"/>
    <property type="evidence" value="ECO:0007669"/>
    <property type="project" value="InterPro"/>
</dbReference>
<dbReference type="GO" id="GO:0005524">
    <property type="term" value="F:ATP binding"/>
    <property type="evidence" value="ECO:0007669"/>
    <property type="project" value="UniProtKB-KW"/>
</dbReference>
<dbReference type="GO" id="GO:0046872">
    <property type="term" value="F:metal ion binding"/>
    <property type="evidence" value="ECO:0007669"/>
    <property type="project" value="UniProtKB-KW"/>
</dbReference>
<dbReference type="GO" id="GO:0019427">
    <property type="term" value="P:acetyl-CoA biosynthetic process from acetate"/>
    <property type="evidence" value="ECO:0007669"/>
    <property type="project" value="UniProtKB-UniRule"/>
</dbReference>
<dbReference type="GO" id="GO:0006935">
    <property type="term" value="P:chemotaxis"/>
    <property type="evidence" value="ECO:0007669"/>
    <property type="project" value="UniProtKB-UniRule"/>
</dbReference>
<dbReference type="CDD" id="cd05966">
    <property type="entry name" value="ACS"/>
    <property type="match status" value="1"/>
</dbReference>
<dbReference type="FunFam" id="3.30.300.30:FF:000004">
    <property type="entry name" value="Acetyl-coenzyme A synthetase"/>
    <property type="match status" value="1"/>
</dbReference>
<dbReference type="FunFam" id="3.40.50.12780:FF:000001">
    <property type="entry name" value="Acetyl-coenzyme A synthetase"/>
    <property type="match status" value="1"/>
</dbReference>
<dbReference type="Gene3D" id="3.30.300.30">
    <property type="match status" value="1"/>
</dbReference>
<dbReference type="Gene3D" id="3.40.50.12780">
    <property type="entry name" value="N-terminal domain of ligase-like"/>
    <property type="match status" value="1"/>
</dbReference>
<dbReference type="HAMAP" id="MF_01123">
    <property type="entry name" value="Ac_CoA_synth"/>
    <property type="match status" value="1"/>
</dbReference>
<dbReference type="InterPro" id="IPR011904">
    <property type="entry name" value="Ac_CoA_lig"/>
</dbReference>
<dbReference type="InterPro" id="IPR032387">
    <property type="entry name" value="ACAS_N"/>
</dbReference>
<dbReference type="InterPro" id="IPR025110">
    <property type="entry name" value="AMP-bd_C"/>
</dbReference>
<dbReference type="InterPro" id="IPR045851">
    <property type="entry name" value="AMP-bd_C_sf"/>
</dbReference>
<dbReference type="InterPro" id="IPR020845">
    <property type="entry name" value="AMP-binding_CS"/>
</dbReference>
<dbReference type="InterPro" id="IPR000873">
    <property type="entry name" value="AMP-dep_synth/lig_dom"/>
</dbReference>
<dbReference type="InterPro" id="IPR042099">
    <property type="entry name" value="ANL_N_sf"/>
</dbReference>
<dbReference type="NCBIfam" id="TIGR02188">
    <property type="entry name" value="Ac_CoA_lig_AcsA"/>
    <property type="match status" value="1"/>
</dbReference>
<dbReference type="NCBIfam" id="NF001208">
    <property type="entry name" value="PRK00174.1"/>
    <property type="match status" value="1"/>
</dbReference>
<dbReference type="PANTHER" id="PTHR24095">
    <property type="entry name" value="ACETYL-COENZYME A SYNTHETASE"/>
    <property type="match status" value="1"/>
</dbReference>
<dbReference type="PANTHER" id="PTHR24095:SF243">
    <property type="entry name" value="ACETYL-COENZYME A SYNTHETASE"/>
    <property type="match status" value="1"/>
</dbReference>
<dbReference type="Pfam" id="PF16177">
    <property type="entry name" value="ACAS_N"/>
    <property type="match status" value="1"/>
</dbReference>
<dbReference type="Pfam" id="PF00501">
    <property type="entry name" value="AMP-binding"/>
    <property type="match status" value="1"/>
</dbReference>
<dbReference type="Pfam" id="PF13193">
    <property type="entry name" value="AMP-binding_C"/>
    <property type="match status" value="1"/>
</dbReference>
<dbReference type="SUPFAM" id="SSF56801">
    <property type="entry name" value="Acetyl-CoA synthetase-like"/>
    <property type="match status" value="1"/>
</dbReference>
<dbReference type="PROSITE" id="PS00455">
    <property type="entry name" value="AMP_BINDING"/>
    <property type="match status" value="1"/>
</dbReference>
<organism>
    <name type="scientific">Yersinia pestis bv. Antiqua (strain Nepal516)</name>
    <dbReference type="NCBI Taxonomy" id="377628"/>
    <lineage>
        <taxon>Bacteria</taxon>
        <taxon>Pseudomonadati</taxon>
        <taxon>Pseudomonadota</taxon>
        <taxon>Gammaproteobacteria</taxon>
        <taxon>Enterobacterales</taxon>
        <taxon>Yersiniaceae</taxon>
        <taxon>Yersinia</taxon>
    </lineage>
</organism>
<protein>
    <recommendedName>
        <fullName evidence="1">Acetyl-coenzyme A synthetase</fullName>
        <shortName evidence="1">AcCoA synthetase</shortName>
        <shortName evidence="1">Acs</shortName>
        <ecNumber evidence="1">6.2.1.1</ecNumber>
    </recommendedName>
    <alternativeName>
        <fullName evidence="1">Acetate--CoA ligase</fullName>
    </alternativeName>
    <alternativeName>
        <fullName evidence="1">Acyl-activating enzyme</fullName>
    </alternativeName>
</protein>
<keyword id="KW-0007">Acetylation</keyword>
<keyword id="KW-0067">ATP-binding</keyword>
<keyword id="KW-0436">Ligase</keyword>
<keyword id="KW-0460">Magnesium</keyword>
<keyword id="KW-0479">Metal-binding</keyword>
<keyword id="KW-0547">Nucleotide-binding</keyword>
<proteinExistence type="inferred from homology"/>
<sequence length="652" mass="72072">MSQIHKHPIPAAIAEHALITPEKYQHYYQQSVQNPDEFWGEQGKIIDWIKPYKTVKNTSFDPGHVSIRWFEDGTLNLAANCLDRHLAERGDQTAIIWEGDDPNQSKTVTYKQLHHDVCQFANVLKSLGVKKGDVVAIYMPMVPEAAVAMLACARIGAVHSVIFGGFSPDAVAGRIIDSHSKLVITADEGIRAGRAIPLKKNVDEALKNPAITSIKNVVVFQRTGNASYWEDGRDVWWHDLIKEASADCPPEEMNAEDPLFILYTSGSTGKPKGVVHTTGGYLVYAALTFKYVFDYHPGDIYWCTADVGWVTGHSYLLYGPLACGAITLMFEGVPNYPGVNRLSQVVDKHKVNILYTAPTAIRALMAEGDKAIEGTKRDSLRIMGSVGEPINPEAWEWYYNKIGNSKCPIVDTWWQTETGGFMITPLPGATELKAGSATRPFFGVQPALVDNLGNPQEGVAEGNLVITDSWPGQARTLFGDHERFEQTYFSTFKGMYFSGDGARRDEDGYYWITGRVDDVLNVSGHRLGTAEIESALVAHPKIAEAAVVGVPHNIKGQAIYAYITLNHGEEPTPELYTEVRNWVRKEIGPLATPDILHWTDSLPKTRSGKIMRRILRKIATGDTSNLGDTSTLADPSVVEKLLEEKQSMQTPS</sequence>
<reference key="1">
    <citation type="journal article" date="2006" name="J. Bacteriol.">
        <title>Complete genome sequence of Yersinia pestis strains Antiqua and Nepal516: evidence of gene reduction in an emerging pathogen.</title>
        <authorList>
            <person name="Chain P.S.G."/>
            <person name="Hu P."/>
            <person name="Malfatti S.A."/>
            <person name="Radnedge L."/>
            <person name="Larimer F."/>
            <person name="Vergez L.M."/>
            <person name="Worsham P."/>
            <person name="Chu M.C."/>
            <person name="Andersen G.L."/>
        </authorList>
    </citation>
    <scope>NUCLEOTIDE SEQUENCE [LARGE SCALE GENOMIC DNA]</scope>
    <source>
        <strain>Nepal516</strain>
    </source>
</reference>
<reference key="2">
    <citation type="submission" date="2009-04" db="EMBL/GenBank/DDBJ databases">
        <title>Yersinia pestis Nepal516A whole genome shotgun sequencing project.</title>
        <authorList>
            <person name="Plunkett G. III"/>
            <person name="Anderson B.D."/>
            <person name="Baumler D.J."/>
            <person name="Burland V."/>
            <person name="Cabot E.L."/>
            <person name="Glasner J.D."/>
            <person name="Mau B."/>
            <person name="Neeno-Eckwall E."/>
            <person name="Perna N.T."/>
            <person name="Munk A.C."/>
            <person name="Tapia R."/>
            <person name="Green L.D."/>
            <person name="Rogers Y.C."/>
            <person name="Detter J.C."/>
            <person name="Bruce D.C."/>
            <person name="Brettin T.S."/>
        </authorList>
    </citation>
    <scope>NUCLEOTIDE SEQUENCE [LARGE SCALE GENOMIC DNA]</scope>
    <source>
        <strain>Nepal516</strain>
    </source>
</reference>